<gene>
    <name evidence="1" type="primary">wecG</name>
    <name evidence="1" type="synonym">rffM</name>
    <name type="ordered locus">YPO3855</name>
    <name type="ordered locus">y0373</name>
    <name type="ordered locus">YP_3190</name>
</gene>
<evidence type="ECO:0000255" key="1">
    <source>
        <dbReference type="HAMAP-Rule" id="MF_01001"/>
    </source>
</evidence>
<evidence type="ECO:0000305" key="2"/>
<sequence length="246" mass="27676">MEPNTVIPKYNVRGFEIWGFRDMAQVLDHLLGSGPVKTGTLVAMNAEKLLKAEDDTALCELIKNAEYLYADGISMVRAIRRKYPQAELSRVAGADLWEALMQRAGQQGTPVFLVGGKPDVLAETEAKLRAQWNVNLVGSQDGYFTPEQREALFARIAASGAAIVTVAMGSPKQEIFMRDCRKFYPDALYMGVGGTYDVFTSHVKRAPKIWQNMGLEWLYRLLAQPSRIRRQLKLLKFVGYYYSGRL</sequence>
<organism>
    <name type="scientific">Yersinia pestis</name>
    <dbReference type="NCBI Taxonomy" id="632"/>
    <lineage>
        <taxon>Bacteria</taxon>
        <taxon>Pseudomonadati</taxon>
        <taxon>Pseudomonadota</taxon>
        <taxon>Gammaproteobacteria</taxon>
        <taxon>Enterobacterales</taxon>
        <taxon>Yersiniaceae</taxon>
        <taxon>Yersinia</taxon>
    </lineage>
</organism>
<comment type="function">
    <text evidence="1">Catalyzes the synthesis of Und-PP-GlcNAc-ManNAcA (Lipid II), the second lipid-linked intermediate involved in enterobacterial common antigen (ECA) synthesis.</text>
</comment>
<comment type="catalytic activity">
    <reaction evidence="1">
        <text>UDP-N-acetyl-alpha-D-mannosaminouronate + N-acetyl-alpha-D-glucosaminyl-di-trans,octa-cis-undecaprenyl diphosphate = beta-D-ManNAcA-(1-&gt;4)-alpha-D-GlcNAc-di-trans,octa-cis-undecaprenyl diphosphate + UDP + H(+)</text>
        <dbReference type="Rhea" id="RHEA:28366"/>
        <dbReference type="ChEBI" id="CHEBI:15378"/>
        <dbReference type="ChEBI" id="CHEBI:58223"/>
        <dbReference type="ChEBI" id="CHEBI:61495"/>
        <dbReference type="ChEBI" id="CHEBI:62959"/>
        <dbReference type="ChEBI" id="CHEBI:70731"/>
        <dbReference type="EC" id="2.4.1.180"/>
    </reaction>
</comment>
<comment type="pathway">
    <text evidence="1">Bacterial outer membrane biogenesis; enterobacterial common antigen biosynthesis.</text>
</comment>
<comment type="similarity">
    <text evidence="1">Belongs to the glycosyltransferase 26 family.</text>
</comment>
<name>WECG_YERPE</name>
<protein>
    <recommendedName>
        <fullName evidence="1">UDP-N-acetyl-D-mannosaminuronic acid transferase</fullName>
        <shortName evidence="1">UDP-ManNAcA transferase</shortName>
        <ecNumber evidence="1">2.4.1.180</ecNumber>
    </recommendedName>
</protein>
<accession>Q8ZAF2</accession>
<accession>Q0WAF5</accession>
<proteinExistence type="inferred from homology"/>
<dbReference type="EC" id="2.4.1.180" evidence="1"/>
<dbReference type="EMBL" id="AL590842">
    <property type="protein sequence ID" value="CAL22442.1"/>
    <property type="molecule type" value="Genomic_DNA"/>
</dbReference>
<dbReference type="EMBL" id="AE009952">
    <property type="protein sequence ID" value="AAM83962.1"/>
    <property type="molecule type" value="Genomic_DNA"/>
</dbReference>
<dbReference type="EMBL" id="AE017042">
    <property type="protein sequence ID" value="AAS63358.1"/>
    <property type="molecule type" value="Genomic_DNA"/>
</dbReference>
<dbReference type="PIR" id="AG0469">
    <property type="entry name" value="AG0469"/>
</dbReference>
<dbReference type="RefSeq" id="WP_002211977.1">
    <property type="nucleotide sequence ID" value="NZ_WUCM01000073.1"/>
</dbReference>
<dbReference type="RefSeq" id="YP_002348733.1">
    <property type="nucleotide sequence ID" value="NC_003143.1"/>
</dbReference>
<dbReference type="SMR" id="Q8ZAF2"/>
<dbReference type="STRING" id="214092.YPO3855"/>
<dbReference type="CAZy" id="GT26">
    <property type="family name" value="Glycosyltransferase Family 26"/>
</dbReference>
<dbReference type="PaxDb" id="214092-YPO3855"/>
<dbReference type="DNASU" id="1145320"/>
<dbReference type="EnsemblBacteria" id="AAS63358">
    <property type="protein sequence ID" value="AAS63358"/>
    <property type="gene ID" value="YP_3190"/>
</dbReference>
<dbReference type="GeneID" id="57974848"/>
<dbReference type="KEGG" id="ype:YPO3855"/>
<dbReference type="KEGG" id="ypk:y0373"/>
<dbReference type="KEGG" id="ypm:YP_3190"/>
<dbReference type="PATRIC" id="fig|214092.21.peg.4381"/>
<dbReference type="eggNOG" id="COG1922">
    <property type="taxonomic scope" value="Bacteria"/>
</dbReference>
<dbReference type="HOGENOM" id="CLU_063203_3_2_6"/>
<dbReference type="OMA" id="LYQEPWR"/>
<dbReference type="OrthoDB" id="9808602at2"/>
<dbReference type="UniPathway" id="UPA00566"/>
<dbReference type="Proteomes" id="UP000000815">
    <property type="component" value="Chromosome"/>
</dbReference>
<dbReference type="Proteomes" id="UP000001019">
    <property type="component" value="Chromosome"/>
</dbReference>
<dbReference type="Proteomes" id="UP000002490">
    <property type="component" value="Chromosome"/>
</dbReference>
<dbReference type="GO" id="GO:0016758">
    <property type="term" value="F:hexosyltransferase activity"/>
    <property type="evidence" value="ECO:0000318"/>
    <property type="project" value="GO_Central"/>
</dbReference>
<dbReference type="GO" id="GO:0047241">
    <property type="term" value="F:lipopolysaccharide N-acetylmannosaminouronosyltransferase activity"/>
    <property type="evidence" value="ECO:0007669"/>
    <property type="project" value="UniProtKB-UniRule"/>
</dbReference>
<dbReference type="GO" id="GO:0009246">
    <property type="term" value="P:enterobacterial common antigen biosynthetic process"/>
    <property type="evidence" value="ECO:0007669"/>
    <property type="project" value="UniProtKB-UniRule"/>
</dbReference>
<dbReference type="CDD" id="cd06533">
    <property type="entry name" value="Glyco_transf_WecG_TagA"/>
    <property type="match status" value="1"/>
</dbReference>
<dbReference type="HAMAP" id="MF_01001">
    <property type="entry name" value="WecG_RffM"/>
    <property type="match status" value="1"/>
</dbReference>
<dbReference type="InterPro" id="IPR023085">
    <property type="entry name" value="UDP-ManNAcA_Trfase_WecG"/>
</dbReference>
<dbReference type="InterPro" id="IPR004629">
    <property type="entry name" value="WecG_TagA_CpsF"/>
</dbReference>
<dbReference type="NCBIfam" id="NF002980">
    <property type="entry name" value="PRK03692.1"/>
    <property type="match status" value="1"/>
</dbReference>
<dbReference type="NCBIfam" id="TIGR00696">
    <property type="entry name" value="wecG_tagA_cpsF"/>
    <property type="match status" value="1"/>
</dbReference>
<dbReference type="PANTHER" id="PTHR34136">
    <property type="match status" value="1"/>
</dbReference>
<dbReference type="PANTHER" id="PTHR34136:SF1">
    <property type="entry name" value="UDP-N-ACETYL-D-MANNOSAMINURONIC ACID TRANSFERASE"/>
    <property type="match status" value="1"/>
</dbReference>
<dbReference type="Pfam" id="PF03808">
    <property type="entry name" value="Glyco_tran_WecG"/>
    <property type="match status" value="1"/>
</dbReference>
<feature type="chain" id="PRO_0000208436" description="UDP-N-acetyl-D-mannosaminuronic acid transferase">
    <location>
        <begin position="1"/>
        <end position="246"/>
    </location>
</feature>
<feature type="sequence conflict" description="In Ref. 3; AAS63358." evidence="2" ref="3">
    <original>L</original>
    <variation>R</variation>
    <location>
        <position position="188"/>
    </location>
</feature>
<keyword id="KW-0328">Glycosyltransferase</keyword>
<keyword id="KW-1185">Reference proteome</keyword>
<keyword id="KW-0808">Transferase</keyword>
<reference key="1">
    <citation type="journal article" date="2001" name="Nature">
        <title>Genome sequence of Yersinia pestis, the causative agent of plague.</title>
        <authorList>
            <person name="Parkhill J."/>
            <person name="Wren B.W."/>
            <person name="Thomson N.R."/>
            <person name="Titball R.W."/>
            <person name="Holden M.T.G."/>
            <person name="Prentice M.B."/>
            <person name="Sebaihia M."/>
            <person name="James K.D."/>
            <person name="Churcher C.M."/>
            <person name="Mungall K.L."/>
            <person name="Baker S."/>
            <person name="Basham D."/>
            <person name="Bentley S.D."/>
            <person name="Brooks K."/>
            <person name="Cerdeno-Tarraga A.-M."/>
            <person name="Chillingworth T."/>
            <person name="Cronin A."/>
            <person name="Davies R.M."/>
            <person name="Davis P."/>
            <person name="Dougan G."/>
            <person name="Feltwell T."/>
            <person name="Hamlin N."/>
            <person name="Holroyd S."/>
            <person name="Jagels K."/>
            <person name="Karlyshev A.V."/>
            <person name="Leather S."/>
            <person name="Moule S."/>
            <person name="Oyston P.C.F."/>
            <person name="Quail M.A."/>
            <person name="Rutherford K.M."/>
            <person name="Simmonds M."/>
            <person name="Skelton J."/>
            <person name="Stevens K."/>
            <person name="Whitehead S."/>
            <person name="Barrell B.G."/>
        </authorList>
    </citation>
    <scope>NUCLEOTIDE SEQUENCE [LARGE SCALE GENOMIC DNA]</scope>
    <source>
        <strain>CO-92 / Biovar Orientalis</strain>
    </source>
</reference>
<reference key="2">
    <citation type="journal article" date="2002" name="J. Bacteriol.">
        <title>Genome sequence of Yersinia pestis KIM.</title>
        <authorList>
            <person name="Deng W."/>
            <person name="Burland V."/>
            <person name="Plunkett G. III"/>
            <person name="Boutin A."/>
            <person name="Mayhew G.F."/>
            <person name="Liss P."/>
            <person name="Perna N.T."/>
            <person name="Rose D.J."/>
            <person name="Mau B."/>
            <person name="Zhou S."/>
            <person name="Schwartz D.C."/>
            <person name="Fetherston J.D."/>
            <person name="Lindler L.E."/>
            <person name="Brubaker R.R."/>
            <person name="Plano G.V."/>
            <person name="Straley S.C."/>
            <person name="McDonough K.A."/>
            <person name="Nilles M.L."/>
            <person name="Matson J.S."/>
            <person name="Blattner F.R."/>
            <person name="Perry R.D."/>
        </authorList>
    </citation>
    <scope>NUCLEOTIDE SEQUENCE [LARGE SCALE GENOMIC DNA]</scope>
    <source>
        <strain>KIM10+ / Biovar Mediaevalis</strain>
    </source>
</reference>
<reference key="3">
    <citation type="journal article" date="2004" name="DNA Res.">
        <title>Complete genome sequence of Yersinia pestis strain 91001, an isolate avirulent to humans.</title>
        <authorList>
            <person name="Song Y."/>
            <person name="Tong Z."/>
            <person name="Wang J."/>
            <person name="Wang L."/>
            <person name="Guo Z."/>
            <person name="Han Y."/>
            <person name="Zhang J."/>
            <person name="Pei D."/>
            <person name="Zhou D."/>
            <person name="Qin H."/>
            <person name="Pang X."/>
            <person name="Han Y."/>
            <person name="Zhai J."/>
            <person name="Li M."/>
            <person name="Cui B."/>
            <person name="Qi Z."/>
            <person name="Jin L."/>
            <person name="Dai R."/>
            <person name="Chen F."/>
            <person name="Li S."/>
            <person name="Ye C."/>
            <person name="Du Z."/>
            <person name="Lin W."/>
            <person name="Wang J."/>
            <person name="Yu J."/>
            <person name="Yang H."/>
            <person name="Wang J."/>
            <person name="Huang P."/>
            <person name="Yang R."/>
        </authorList>
    </citation>
    <scope>NUCLEOTIDE SEQUENCE [LARGE SCALE GENOMIC DNA]</scope>
    <source>
        <strain>91001 / Biovar Mediaevalis</strain>
    </source>
</reference>